<organism>
    <name type="scientific">Saccharophagus degradans (strain 2-40 / ATCC 43961 / DSM 17024)</name>
    <dbReference type="NCBI Taxonomy" id="203122"/>
    <lineage>
        <taxon>Bacteria</taxon>
        <taxon>Pseudomonadati</taxon>
        <taxon>Pseudomonadota</taxon>
        <taxon>Gammaproteobacteria</taxon>
        <taxon>Cellvibrionales</taxon>
        <taxon>Cellvibrionaceae</taxon>
        <taxon>Saccharophagus</taxon>
    </lineage>
</organism>
<keyword id="KW-0012">Acyltransferase</keyword>
<keyword id="KW-0963">Cytoplasm</keyword>
<keyword id="KW-0276">Fatty acid metabolism</keyword>
<keyword id="KW-0442">Lipid degradation</keyword>
<keyword id="KW-0443">Lipid metabolism</keyword>
<keyword id="KW-1185">Reference proteome</keyword>
<keyword id="KW-0808">Transferase</keyword>
<protein>
    <recommendedName>
        <fullName evidence="1">3-ketoacyl-CoA thiolase</fullName>
        <ecNumber evidence="1">2.3.1.16</ecNumber>
    </recommendedName>
    <alternativeName>
        <fullName evidence="1">Acetyl-CoA acyltransferase</fullName>
    </alternativeName>
    <alternativeName>
        <fullName evidence="1">Beta-ketothiolase</fullName>
    </alternativeName>
    <alternativeName>
        <fullName evidence="1">Fatty acid oxidation complex subunit beta</fullName>
    </alternativeName>
</protein>
<comment type="function">
    <text evidence="1">Catalyzes the final step of fatty acid oxidation in which acetyl-CoA is released and the CoA ester of a fatty acid two carbons shorter is formed.</text>
</comment>
<comment type="catalytic activity">
    <reaction evidence="1">
        <text>an acyl-CoA + acetyl-CoA = a 3-oxoacyl-CoA + CoA</text>
        <dbReference type="Rhea" id="RHEA:21564"/>
        <dbReference type="ChEBI" id="CHEBI:57287"/>
        <dbReference type="ChEBI" id="CHEBI:57288"/>
        <dbReference type="ChEBI" id="CHEBI:58342"/>
        <dbReference type="ChEBI" id="CHEBI:90726"/>
        <dbReference type="EC" id="2.3.1.16"/>
    </reaction>
</comment>
<comment type="pathway">
    <text evidence="1">Lipid metabolism; fatty acid beta-oxidation.</text>
</comment>
<comment type="subunit">
    <text evidence="1">Heterotetramer of two alpha chains (FadB) and two beta chains (FadA).</text>
</comment>
<comment type="subcellular location">
    <subcellularLocation>
        <location evidence="1">Cytoplasm</location>
    </subcellularLocation>
</comment>
<comment type="similarity">
    <text evidence="1">Belongs to the thiolase-like superfamily. Thiolase family.</text>
</comment>
<evidence type="ECO:0000255" key="1">
    <source>
        <dbReference type="HAMAP-Rule" id="MF_01620"/>
    </source>
</evidence>
<feature type="chain" id="PRO_0000292899" description="3-ketoacyl-CoA thiolase">
    <location>
        <begin position="1"/>
        <end position="391"/>
    </location>
</feature>
<feature type="active site" description="Acyl-thioester intermediate" evidence="1">
    <location>
        <position position="95"/>
    </location>
</feature>
<feature type="active site" description="Proton acceptor" evidence="1">
    <location>
        <position position="347"/>
    </location>
</feature>
<feature type="active site" description="Proton acceptor" evidence="1">
    <location>
        <position position="377"/>
    </location>
</feature>
<dbReference type="EC" id="2.3.1.16" evidence="1"/>
<dbReference type="EMBL" id="CP000282">
    <property type="protein sequence ID" value="ABD80868.1"/>
    <property type="molecule type" value="Genomic_DNA"/>
</dbReference>
<dbReference type="RefSeq" id="WP_011468088.1">
    <property type="nucleotide sequence ID" value="NC_007912.1"/>
</dbReference>
<dbReference type="SMR" id="Q21KB1"/>
<dbReference type="STRING" id="203122.Sde_1606"/>
<dbReference type="GeneID" id="98613283"/>
<dbReference type="KEGG" id="sde:Sde_1606"/>
<dbReference type="eggNOG" id="COG0183">
    <property type="taxonomic scope" value="Bacteria"/>
</dbReference>
<dbReference type="HOGENOM" id="CLU_031026_2_3_6"/>
<dbReference type="OrthoDB" id="8951704at2"/>
<dbReference type="UniPathway" id="UPA00659"/>
<dbReference type="Proteomes" id="UP000001947">
    <property type="component" value="Chromosome"/>
</dbReference>
<dbReference type="GO" id="GO:0005737">
    <property type="term" value="C:cytoplasm"/>
    <property type="evidence" value="ECO:0007669"/>
    <property type="project" value="UniProtKB-SubCell"/>
</dbReference>
<dbReference type="GO" id="GO:0003988">
    <property type="term" value="F:acetyl-CoA C-acyltransferase activity"/>
    <property type="evidence" value="ECO:0007669"/>
    <property type="project" value="UniProtKB-UniRule"/>
</dbReference>
<dbReference type="GO" id="GO:0006635">
    <property type="term" value="P:fatty acid beta-oxidation"/>
    <property type="evidence" value="ECO:0007669"/>
    <property type="project" value="UniProtKB-UniRule"/>
</dbReference>
<dbReference type="GO" id="GO:0010124">
    <property type="term" value="P:phenylacetate catabolic process"/>
    <property type="evidence" value="ECO:0007669"/>
    <property type="project" value="TreeGrafter"/>
</dbReference>
<dbReference type="CDD" id="cd00751">
    <property type="entry name" value="thiolase"/>
    <property type="match status" value="1"/>
</dbReference>
<dbReference type="FunFam" id="3.40.47.10:FF:000010">
    <property type="entry name" value="Acetyl-CoA acetyltransferase (Thiolase)"/>
    <property type="match status" value="1"/>
</dbReference>
<dbReference type="Gene3D" id="3.40.47.10">
    <property type="match status" value="2"/>
</dbReference>
<dbReference type="HAMAP" id="MF_01620">
    <property type="entry name" value="FadA"/>
    <property type="match status" value="1"/>
</dbReference>
<dbReference type="InterPro" id="IPR012805">
    <property type="entry name" value="FadA"/>
</dbReference>
<dbReference type="InterPro" id="IPR002155">
    <property type="entry name" value="Thiolase"/>
</dbReference>
<dbReference type="InterPro" id="IPR016039">
    <property type="entry name" value="Thiolase-like"/>
</dbReference>
<dbReference type="InterPro" id="IPR050215">
    <property type="entry name" value="Thiolase-like_sf_Thiolase"/>
</dbReference>
<dbReference type="InterPro" id="IPR020615">
    <property type="entry name" value="Thiolase_acyl_enz_int_AS"/>
</dbReference>
<dbReference type="InterPro" id="IPR020617">
    <property type="entry name" value="Thiolase_C"/>
</dbReference>
<dbReference type="InterPro" id="IPR020613">
    <property type="entry name" value="Thiolase_CS"/>
</dbReference>
<dbReference type="InterPro" id="IPR020616">
    <property type="entry name" value="Thiolase_N"/>
</dbReference>
<dbReference type="NCBIfam" id="TIGR01930">
    <property type="entry name" value="AcCoA-C-Actrans"/>
    <property type="match status" value="1"/>
</dbReference>
<dbReference type="NCBIfam" id="TIGR02445">
    <property type="entry name" value="fadA"/>
    <property type="match status" value="1"/>
</dbReference>
<dbReference type="NCBIfam" id="NF006510">
    <property type="entry name" value="PRK08947.1"/>
    <property type="match status" value="1"/>
</dbReference>
<dbReference type="PANTHER" id="PTHR43853:SF11">
    <property type="entry name" value="3-KETOACYL-COA THIOLASE FADA"/>
    <property type="match status" value="1"/>
</dbReference>
<dbReference type="PANTHER" id="PTHR43853">
    <property type="entry name" value="3-KETOACYL-COA THIOLASE, PEROXISOMAL"/>
    <property type="match status" value="1"/>
</dbReference>
<dbReference type="Pfam" id="PF02803">
    <property type="entry name" value="Thiolase_C"/>
    <property type="match status" value="1"/>
</dbReference>
<dbReference type="Pfam" id="PF00108">
    <property type="entry name" value="Thiolase_N"/>
    <property type="match status" value="1"/>
</dbReference>
<dbReference type="PIRSF" id="PIRSF000429">
    <property type="entry name" value="Ac-CoA_Ac_transf"/>
    <property type="match status" value="1"/>
</dbReference>
<dbReference type="SUPFAM" id="SSF53901">
    <property type="entry name" value="Thiolase-like"/>
    <property type="match status" value="2"/>
</dbReference>
<dbReference type="PROSITE" id="PS00098">
    <property type="entry name" value="THIOLASE_1"/>
    <property type="match status" value="1"/>
</dbReference>
<dbReference type="PROSITE" id="PS00737">
    <property type="entry name" value="THIOLASE_2"/>
    <property type="match status" value="1"/>
</dbReference>
<accession>Q21KB1</accession>
<sequence>MSLQPRDVVIVDYARTPMGRSKNGCYRNVRADDLSADLITGLLARNAALDPAQIDDMIWGCVMQRGEQGFNVARNILLRAGLPHTVPAQTVNRLCGSSMSALHTAAANIMAGLGDVYLVGGVEHMGHIDMNQHVDPNPALGHSVAQAAGSMGLTAEYLSLLHGITREAMDEFGARSHRKAAEATEQGKFAREIIARIGHDETGAPTLIKHDETIRPDTTVEALSKLKPAFNPKGGTVTAGTSSQITDGASSMLVMSAAKAAELGLTPIAKIRSMALAGVDPSIMGYGPVPATQKALANAGLSIEDIDVVELNEAFAAQALPVLKDLNLLDAMEDKVNLYGGAIALGHPFGCSGTRITGTLLSVMQDKDATLGVSTMCIGLGQGITTIVERV</sequence>
<proteinExistence type="inferred from homology"/>
<name>FADA_SACD2</name>
<gene>
    <name evidence="1" type="primary">fadA</name>
    <name type="ordered locus">Sde_1606</name>
</gene>
<reference key="1">
    <citation type="journal article" date="2008" name="PLoS Genet.">
        <title>Complete genome sequence of the complex carbohydrate-degrading marine bacterium, Saccharophagus degradans strain 2-40 T.</title>
        <authorList>
            <person name="Weiner R.M."/>
            <person name="Taylor L.E. II"/>
            <person name="Henrissat B."/>
            <person name="Hauser L."/>
            <person name="Land M."/>
            <person name="Coutinho P.M."/>
            <person name="Rancurel C."/>
            <person name="Saunders E.H."/>
            <person name="Longmire A.G."/>
            <person name="Zhang H."/>
            <person name="Bayer E.A."/>
            <person name="Gilbert H.J."/>
            <person name="Larimer F."/>
            <person name="Zhulin I.B."/>
            <person name="Ekborg N.A."/>
            <person name="Lamed R."/>
            <person name="Richardson P.M."/>
            <person name="Borovok I."/>
            <person name="Hutcheson S."/>
        </authorList>
    </citation>
    <scope>NUCLEOTIDE SEQUENCE [LARGE SCALE GENOMIC DNA]</scope>
    <source>
        <strain>2-40 / ATCC 43961 / DSM 17024</strain>
    </source>
</reference>